<gene>
    <name evidence="1" type="primary">yfeO</name>
    <name type="ordered locus">SeD_A2766</name>
</gene>
<dbReference type="EMBL" id="CP001144">
    <property type="protein sequence ID" value="ACH74135.1"/>
    <property type="molecule type" value="Genomic_DNA"/>
</dbReference>
<dbReference type="RefSeq" id="WP_000468920.1">
    <property type="nucleotide sequence ID" value="NC_011205.1"/>
</dbReference>
<dbReference type="SMR" id="B5FQA1"/>
<dbReference type="KEGG" id="sed:SeD_A2766"/>
<dbReference type="HOGENOM" id="CLU_053130_0_0_6"/>
<dbReference type="Proteomes" id="UP000008322">
    <property type="component" value="Chromosome"/>
</dbReference>
<dbReference type="GO" id="GO:0005886">
    <property type="term" value="C:plasma membrane"/>
    <property type="evidence" value="ECO:0007669"/>
    <property type="project" value="UniProtKB-SubCell"/>
</dbReference>
<dbReference type="GO" id="GO:0015108">
    <property type="term" value="F:chloride transmembrane transporter activity"/>
    <property type="evidence" value="ECO:0007669"/>
    <property type="project" value="InterPro"/>
</dbReference>
<dbReference type="GO" id="GO:0005216">
    <property type="term" value="F:monoatomic ion channel activity"/>
    <property type="evidence" value="ECO:0007669"/>
    <property type="project" value="UniProtKB-UniRule"/>
</dbReference>
<dbReference type="CDD" id="cd00400">
    <property type="entry name" value="Voltage_gated_ClC"/>
    <property type="match status" value="1"/>
</dbReference>
<dbReference type="FunFam" id="1.10.3080.10:FF:000007">
    <property type="entry name" value="Putative ion-transport protein YfeO"/>
    <property type="match status" value="1"/>
</dbReference>
<dbReference type="Gene3D" id="1.10.3080.10">
    <property type="entry name" value="Clc chloride channel"/>
    <property type="match status" value="1"/>
</dbReference>
<dbReference type="HAMAP" id="MF_01115">
    <property type="entry name" value="CLC_YfeO"/>
    <property type="match status" value="1"/>
</dbReference>
<dbReference type="InterPro" id="IPR022969">
    <property type="entry name" value="Chloride_channel_YfeO"/>
</dbReference>
<dbReference type="InterPro" id="IPR014743">
    <property type="entry name" value="Cl-channel_core"/>
</dbReference>
<dbReference type="InterPro" id="IPR001807">
    <property type="entry name" value="ClC"/>
</dbReference>
<dbReference type="InterPro" id="IPR050368">
    <property type="entry name" value="ClC-type_chloride_channel"/>
</dbReference>
<dbReference type="NCBIfam" id="NF002971">
    <property type="entry name" value="PRK03655.1"/>
    <property type="match status" value="1"/>
</dbReference>
<dbReference type="PANTHER" id="PTHR43427">
    <property type="entry name" value="CHLORIDE CHANNEL PROTEIN CLC-E"/>
    <property type="match status" value="1"/>
</dbReference>
<dbReference type="PANTHER" id="PTHR43427:SF9">
    <property type="entry name" value="ION-TRANSPORT PROTEIN YFEO-RELATED"/>
    <property type="match status" value="1"/>
</dbReference>
<dbReference type="Pfam" id="PF00654">
    <property type="entry name" value="Voltage_CLC"/>
    <property type="match status" value="1"/>
</dbReference>
<dbReference type="PRINTS" id="PR00762">
    <property type="entry name" value="CLCHANNEL"/>
</dbReference>
<dbReference type="SUPFAM" id="SSF81340">
    <property type="entry name" value="Clc chloride channel"/>
    <property type="match status" value="1"/>
</dbReference>
<feature type="chain" id="PRO_1000137217" description="Putative ion-transport protein YfeO">
    <location>
        <begin position="1"/>
        <end position="411"/>
    </location>
</feature>
<feature type="transmembrane region" description="Helical" evidence="1">
    <location>
        <begin position="9"/>
        <end position="29"/>
    </location>
</feature>
<feature type="transmembrane region" description="Helical" evidence="1">
    <location>
        <begin position="54"/>
        <end position="74"/>
    </location>
</feature>
<feature type="transmembrane region" description="Helical" evidence="1">
    <location>
        <begin position="99"/>
        <end position="119"/>
    </location>
</feature>
<feature type="transmembrane region" description="Helical" evidence="1">
    <location>
        <begin position="149"/>
        <end position="169"/>
    </location>
</feature>
<feature type="transmembrane region" description="Helical" evidence="1">
    <location>
        <begin position="186"/>
        <end position="206"/>
    </location>
</feature>
<feature type="transmembrane region" description="Helical" evidence="1">
    <location>
        <begin position="223"/>
        <end position="243"/>
    </location>
</feature>
<feature type="transmembrane region" description="Helical" evidence="1">
    <location>
        <begin position="258"/>
        <end position="278"/>
    </location>
</feature>
<feature type="transmembrane region" description="Helical" evidence="1">
    <location>
        <begin position="296"/>
        <end position="316"/>
    </location>
</feature>
<feature type="transmembrane region" description="Helical" evidence="1">
    <location>
        <begin position="322"/>
        <end position="342"/>
    </location>
</feature>
<feature type="transmembrane region" description="Helical" evidence="1">
    <location>
        <begin position="343"/>
        <end position="363"/>
    </location>
</feature>
<feature type="transmembrane region" description="Helical" evidence="1">
    <location>
        <begin position="386"/>
        <end position="406"/>
    </location>
</feature>
<sequence>MFHPRARTMLLLSLPALIIGVASSLVLIAAMKVASVFQQFLWQRLPTSIGIAYDSPFWIVGMLTLTGIVVGLIIRYSPGHAGPDPAIEPLISMPVSPSALPGLLLALIIGLAGGVSLGPEHPIMTINIALAAAFGSRLFPRITALDWTILASAGTIGALFGTPVAAALIFSQTLSGSNDIPMWDRLFAPLMAAAAGSLTTSLFFHPHFSLPIAHYTQMRLVDIASGAIVAAIAIAAGMVAVWCLPRLHELLHRLKNPVLILGIGGFILGILGVIGGPLTLFKGLDEMQQMAFSQTLGAGDYFTLAVVKLAALVIAAASGFRGGRIFPAVFIGAALGLMLHAHVEAVPAAITVSCAILGLVLVVTRDGWLSLFMAAVVVPDTNLLPLLCIVMLPAWLLLAGKPLLAANRHEP</sequence>
<accession>B5FQA1</accession>
<reference key="1">
    <citation type="journal article" date="2011" name="J. Bacteriol.">
        <title>Comparative genomics of 28 Salmonella enterica isolates: evidence for CRISPR-mediated adaptive sublineage evolution.</title>
        <authorList>
            <person name="Fricke W.F."/>
            <person name="Mammel M.K."/>
            <person name="McDermott P.F."/>
            <person name="Tartera C."/>
            <person name="White D.G."/>
            <person name="Leclerc J.E."/>
            <person name="Ravel J."/>
            <person name="Cebula T.A."/>
        </authorList>
    </citation>
    <scope>NUCLEOTIDE SEQUENCE [LARGE SCALE GENOMIC DNA]</scope>
    <source>
        <strain>CT_02021853</strain>
    </source>
</reference>
<evidence type="ECO:0000255" key="1">
    <source>
        <dbReference type="HAMAP-Rule" id="MF_01115"/>
    </source>
</evidence>
<organism>
    <name type="scientific">Salmonella dublin (strain CT_02021853)</name>
    <dbReference type="NCBI Taxonomy" id="439851"/>
    <lineage>
        <taxon>Bacteria</taxon>
        <taxon>Pseudomonadati</taxon>
        <taxon>Pseudomonadota</taxon>
        <taxon>Gammaproteobacteria</taxon>
        <taxon>Enterobacterales</taxon>
        <taxon>Enterobacteriaceae</taxon>
        <taxon>Salmonella</taxon>
    </lineage>
</organism>
<name>YFEO_SALDC</name>
<keyword id="KW-1003">Cell membrane</keyword>
<keyword id="KW-0407">Ion channel</keyword>
<keyword id="KW-0406">Ion transport</keyword>
<keyword id="KW-0472">Membrane</keyword>
<keyword id="KW-0812">Transmembrane</keyword>
<keyword id="KW-1133">Transmembrane helix</keyword>
<keyword id="KW-0813">Transport</keyword>
<proteinExistence type="inferred from homology"/>
<protein>
    <recommendedName>
        <fullName evidence="1">Putative ion-transport protein YfeO</fullName>
    </recommendedName>
</protein>
<comment type="subcellular location">
    <subcellularLocation>
        <location evidence="1">Cell membrane</location>
        <topology evidence="1">Multi-pass membrane protein</topology>
    </subcellularLocation>
</comment>
<comment type="similarity">
    <text evidence="1">Belongs to the chloride channel (TC 2.A.49) family.</text>
</comment>